<keyword id="KW-0007">Acetylation</keyword>
<keyword id="KW-0687">Ribonucleoprotein</keyword>
<keyword id="KW-0689">Ribosomal protein</keyword>
<keyword id="KW-0694">RNA-binding</keyword>
<keyword id="KW-0699">rRNA-binding</keyword>
<protein>
    <recommendedName>
        <fullName evidence="1">Large ribosomal subunit protein bL9</fullName>
    </recommendedName>
    <alternativeName>
        <fullName evidence="2">50S ribosomal protein L9</fullName>
    </alternativeName>
</protein>
<name>RL9_SHIF8</name>
<dbReference type="EMBL" id="CP000266">
    <property type="protein sequence ID" value="ABF06332.1"/>
    <property type="molecule type" value="Genomic_DNA"/>
</dbReference>
<dbReference type="RefSeq" id="WP_001196062.1">
    <property type="nucleotide sequence ID" value="NC_008258.1"/>
</dbReference>
<dbReference type="SMR" id="Q0SX83"/>
<dbReference type="GeneID" id="93777620"/>
<dbReference type="KEGG" id="sfv:SFV_4358"/>
<dbReference type="HOGENOM" id="CLU_078938_4_1_6"/>
<dbReference type="Proteomes" id="UP000000659">
    <property type="component" value="Chromosome"/>
</dbReference>
<dbReference type="GO" id="GO:1990904">
    <property type="term" value="C:ribonucleoprotein complex"/>
    <property type="evidence" value="ECO:0007669"/>
    <property type="project" value="UniProtKB-KW"/>
</dbReference>
<dbReference type="GO" id="GO:0005840">
    <property type="term" value="C:ribosome"/>
    <property type="evidence" value="ECO:0007669"/>
    <property type="project" value="UniProtKB-KW"/>
</dbReference>
<dbReference type="GO" id="GO:0019843">
    <property type="term" value="F:rRNA binding"/>
    <property type="evidence" value="ECO:0007669"/>
    <property type="project" value="UniProtKB-UniRule"/>
</dbReference>
<dbReference type="GO" id="GO:0003735">
    <property type="term" value="F:structural constituent of ribosome"/>
    <property type="evidence" value="ECO:0007669"/>
    <property type="project" value="InterPro"/>
</dbReference>
<dbReference type="GO" id="GO:0006412">
    <property type="term" value="P:translation"/>
    <property type="evidence" value="ECO:0007669"/>
    <property type="project" value="UniProtKB-UniRule"/>
</dbReference>
<dbReference type="FunFam" id="3.10.430.100:FF:000001">
    <property type="entry name" value="50S ribosomal protein L9"/>
    <property type="match status" value="1"/>
</dbReference>
<dbReference type="FunFam" id="3.40.5.10:FF:000001">
    <property type="entry name" value="50S ribosomal protein L9"/>
    <property type="match status" value="1"/>
</dbReference>
<dbReference type="Gene3D" id="3.10.430.100">
    <property type="entry name" value="Ribosomal protein L9, C-terminal domain"/>
    <property type="match status" value="1"/>
</dbReference>
<dbReference type="Gene3D" id="3.40.5.10">
    <property type="entry name" value="Ribosomal protein L9, N-terminal domain"/>
    <property type="match status" value="1"/>
</dbReference>
<dbReference type="HAMAP" id="MF_00503">
    <property type="entry name" value="Ribosomal_bL9"/>
    <property type="match status" value="1"/>
</dbReference>
<dbReference type="InterPro" id="IPR000244">
    <property type="entry name" value="Ribosomal_bL9"/>
</dbReference>
<dbReference type="InterPro" id="IPR009027">
    <property type="entry name" value="Ribosomal_bL9/RNase_H1_N"/>
</dbReference>
<dbReference type="InterPro" id="IPR020594">
    <property type="entry name" value="Ribosomal_bL9_bac/chp"/>
</dbReference>
<dbReference type="InterPro" id="IPR020069">
    <property type="entry name" value="Ribosomal_bL9_C"/>
</dbReference>
<dbReference type="InterPro" id="IPR036791">
    <property type="entry name" value="Ribosomal_bL9_C_sf"/>
</dbReference>
<dbReference type="InterPro" id="IPR020070">
    <property type="entry name" value="Ribosomal_bL9_N"/>
</dbReference>
<dbReference type="InterPro" id="IPR036935">
    <property type="entry name" value="Ribosomal_bL9_N_sf"/>
</dbReference>
<dbReference type="NCBIfam" id="TIGR00158">
    <property type="entry name" value="L9"/>
    <property type="match status" value="1"/>
</dbReference>
<dbReference type="PANTHER" id="PTHR21368">
    <property type="entry name" value="50S RIBOSOMAL PROTEIN L9"/>
    <property type="match status" value="1"/>
</dbReference>
<dbReference type="Pfam" id="PF03948">
    <property type="entry name" value="Ribosomal_L9_C"/>
    <property type="match status" value="1"/>
</dbReference>
<dbReference type="Pfam" id="PF01281">
    <property type="entry name" value="Ribosomal_L9_N"/>
    <property type="match status" value="1"/>
</dbReference>
<dbReference type="SUPFAM" id="SSF55658">
    <property type="entry name" value="L9 N-domain-like"/>
    <property type="match status" value="1"/>
</dbReference>
<dbReference type="SUPFAM" id="SSF55653">
    <property type="entry name" value="Ribosomal protein L9 C-domain"/>
    <property type="match status" value="1"/>
</dbReference>
<dbReference type="PROSITE" id="PS00651">
    <property type="entry name" value="RIBOSOMAL_L9"/>
    <property type="match status" value="1"/>
</dbReference>
<feature type="chain" id="PRO_1000014865" description="Large ribosomal subunit protein bL9">
    <location>
        <begin position="1"/>
        <end position="149"/>
    </location>
</feature>
<feature type="modified residue" description="N6-acetyllysine" evidence="1">
    <location>
        <position position="89"/>
    </location>
</feature>
<accession>Q0SX83</accession>
<evidence type="ECO:0000255" key="1">
    <source>
        <dbReference type="HAMAP-Rule" id="MF_00503"/>
    </source>
</evidence>
<evidence type="ECO:0000305" key="2"/>
<comment type="function">
    <text evidence="1">Binds to the 23S rRNA.</text>
</comment>
<comment type="similarity">
    <text evidence="1">Belongs to the bacterial ribosomal protein bL9 family.</text>
</comment>
<proteinExistence type="inferred from homology"/>
<organism>
    <name type="scientific">Shigella flexneri serotype 5b (strain 8401)</name>
    <dbReference type="NCBI Taxonomy" id="373384"/>
    <lineage>
        <taxon>Bacteria</taxon>
        <taxon>Pseudomonadati</taxon>
        <taxon>Pseudomonadota</taxon>
        <taxon>Gammaproteobacteria</taxon>
        <taxon>Enterobacterales</taxon>
        <taxon>Enterobacteriaceae</taxon>
        <taxon>Shigella</taxon>
    </lineage>
</organism>
<gene>
    <name evidence="1" type="primary">rplI</name>
    <name type="ordered locus">SFV_4358</name>
</gene>
<sequence>MQVILLDKVANLGSLGDQVNVKAGYARNFLVPQGKAVPATKKNIEFFEARRAELEAKLAEVLAAANARAEKINALETVTIASKAGDEGKLFGSIGTRDIADAVTAAGVEVAKSEVRLPNGVLRTTGEHEVSFQVHSEVFAKVIVNVVAE</sequence>
<reference key="1">
    <citation type="journal article" date="2006" name="BMC Genomics">
        <title>Complete genome sequence of Shigella flexneri 5b and comparison with Shigella flexneri 2a.</title>
        <authorList>
            <person name="Nie H."/>
            <person name="Yang F."/>
            <person name="Zhang X."/>
            <person name="Yang J."/>
            <person name="Chen L."/>
            <person name="Wang J."/>
            <person name="Xiong Z."/>
            <person name="Peng J."/>
            <person name="Sun L."/>
            <person name="Dong J."/>
            <person name="Xue Y."/>
            <person name="Xu X."/>
            <person name="Chen S."/>
            <person name="Yao Z."/>
            <person name="Shen Y."/>
            <person name="Jin Q."/>
        </authorList>
    </citation>
    <scope>NUCLEOTIDE SEQUENCE [LARGE SCALE GENOMIC DNA]</scope>
    <source>
        <strain>8401</strain>
    </source>
</reference>